<comment type="similarity">
    <text evidence="1">Belongs to the RemA family.</text>
</comment>
<name>Y621_BACAC</name>
<sequence length="87" mass="9647">MAMRFLNIGYGNIVSAHRIIAIVSPESAPIKRTVQEAREHNALLDATYGRKTRAVIVMDDGHVVLSPIQPETIAHRLNNKEDLSEEG</sequence>
<feature type="chain" id="PRO_1000185010" description="Putative regulatory protein BAMEG_0621">
    <location>
        <begin position="1"/>
        <end position="87"/>
    </location>
</feature>
<accession>C3L755</accession>
<organism>
    <name type="scientific">Bacillus anthracis (strain CDC 684 / NRRL 3495)</name>
    <dbReference type="NCBI Taxonomy" id="568206"/>
    <lineage>
        <taxon>Bacteria</taxon>
        <taxon>Bacillati</taxon>
        <taxon>Bacillota</taxon>
        <taxon>Bacilli</taxon>
        <taxon>Bacillales</taxon>
        <taxon>Bacillaceae</taxon>
        <taxon>Bacillus</taxon>
        <taxon>Bacillus cereus group</taxon>
    </lineage>
</organism>
<reference key="1">
    <citation type="submission" date="2008-10" db="EMBL/GenBank/DDBJ databases">
        <title>Genome sequence of Bacillus anthracis str. CDC 684.</title>
        <authorList>
            <person name="Dodson R.J."/>
            <person name="Munk A.C."/>
            <person name="Brettin T."/>
            <person name="Bruce D."/>
            <person name="Detter C."/>
            <person name="Tapia R."/>
            <person name="Han C."/>
            <person name="Sutton G."/>
            <person name="Sims D."/>
        </authorList>
    </citation>
    <scope>NUCLEOTIDE SEQUENCE [LARGE SCALE GENOMIC DNA]</scope>
    <source>
        <strain>CDC 684 / NRRL 3495</strain>
    </source>
</reference>
<protein>
    <recommendedName>
        <fullName evidence="1">Putative regulatory protein BAMEG_0621</fullName>
    </recommendedName>
</protein>
<dbReference type="EMBL" id="CP001215">
    <property type="protein sequence ID" value="ACP14594.1"/>
    <property type="molecule type" value="Genomic_DNA"/>
</dbReference>
<dbReference type="SMR" id="C3L755"/>
<dbReference type="KEGG" id="bah:BAMEG_0621"/>
<dbReference type="HOGENOM" id="CLU_165326_0_0_9"/>
<dbReference type="HAMAP" id="MF_01503">
    <property type="entry name" value="RemA"/>
    <property type="match status" value="1"/>
</dbReference>
<dbReference type="InterPro" id="IPR007169">
    <property type="entry name" value="RemA-like"/>
</dbReference>
<dbReference type="NCBIfam" id="NF046064">
    <property type="entry name" value="MtxBflmRegRemA"/>
    <property type="match status" value="1"/>
</dbReference>
<dbReference type="NCBIfam" id="NF003315">
    <property type="entry name" value="PRK04323.1"/>
    <property type="match status" value="1"/>
</dbReference>
<dbReference type="PANTHER" id="PTHR38449:SF1">
    <property type="entry name" value="REGULATORY PROTEIN SSL2874-RELATED"/>
    <property type="match status" value="1"/>
</dbReference>
<dbReference type="PANTHER" id="PTHR38449">
    <property type="entry name" value="REGULATORY PROTEIN TM_1690-RELATED"/>
    <property type="match status" value="1"/>
</dbReference>
<dbReference type="Pfam" id="PF04025">
    <property type="entry name" value="RemA-like"/>
    <property type="match status" value="1"/>
</dbReference>
<evidence type="ECO:0000255" key="1">
    <source>
        <dbReference type="HAMAP-Rule" id="MF_01503"/>
    </source>
</evidence>
<proteinExistence type="inferred from homology"/>
<gene>
    <name type="ordered locus">BAMEG_0621</name>
</gene>